<reference key="1">
    <citation type="journal article" date="2006" name="PLoS Genet.">
        <title>The complete genome sequence and comparative genome analysis of the high pathogenicity Yersinia enterocolitica strain 8081.</title>
        <authorList>
            <person name="Thomson N.R."/>
            <person name="Howard S."/>
            <person name="Wren B.W."/>
            <person name="Holden M.T.G."/>
            <person name="Crossman L."/>
            <person name="Challis G.L."/>
            <person name="Churcher C."/>
            <person name="Mungall K."/>
            <person name="Brooks K."/>
            <person name="Chillingworth T."/>
            <person name="Feltwell T."/>
            <person name="Abdellah Z."/>
            <person name="Hauser H."/>
            <person name="Jagels K."/>
            <person name="Maddison M."/>
            <person name="Moule S."/>
            <person name="Sanders M."/>
            <person name="Whitehead S."/>
            <person name="Quail M.A."/>
            <person name="Dougan G."/>
            <person name="Parkhill J."/>
            <person name="Prentice M.B."/>
        </authorList>
    </citation>
    <scope>NUCLEOTIDE SEQUENCE [LARGE SCALE GENOMIC DNA]</scope>
    <source>
        <strain>NCTC 13174 / 8081</strain>
    </source>
</reference>
<name>TDH_YERE8</name>
<proteinExistence type="inferred from homology"/>
<organism>
    <name type="scientific">Yersinia enterocolitica serotype O:8 / biotype 1B (strain NCTC 13174 / 8081)</name>
    <dbReference type="NCBI Taxonomy" id="393305"/>
    <lineage>
        <taxon>Bacteria</taxon>
        <taxon>Pseudomonadati</taxon>
        <taxon>Pseudomonadota</taxon>
        <taxon>Gammaproteobacteria</taxon>
        <taxon>Enterobacterales</taxon>
        <taxon>Yersiniaceae</taxon>
        <taxon>Yersinia</taxon>
    </lineage>
</organism>
<accession>A1JHX8</accession>
<keyword id="KW-0963">Cytoplasm</keyword>
<keyword id="KW-0479">Metal-binding</keyword>
<keyword id="KW-0520">NAD</keyword>
<keyword id="KW-0560">Oxidoreductase</keyword>
<keyword id="KW-0862">Zinc</keyword>
<comment type="function">
    <text evidence="1">Catalyzes the NAD(+)-dependent oxidation of L-threonine to 2-amino-3-ketobutyrate.</text>
</comment>
<comment type="catalytic activity">
    <reaction evidence="1">
        <text>L-threonine + NAD(+) = (2S)-2-amino-3-oxobutanoate + NADH + H(+)</text>
        <dbReference type="Rhea" id="RHEA:13161"/>
        <dbReference type="ChEBI" id="CHEBI:15378"/>
        <dbReference type="ChEBI" id="CHEBI:57540"/>
        <dbReference type="ChEBI" id="CHEBI:57926"/>
        <dbReference type="ChEBI" id="CHEBI:57945"/>
        <dbReference type="ChEBI" id="CHEBI:78948"/>
        <dbReference type="EC" id="1.1.1.103"/>
    </reaction>
</comment>
<comment type="cofactor">
    <cofactor evidence="1">
        <name>Zn(2+)</name>
        <dbReference type="ChEBI" id="CHEBI:29105"/>
    </cofactor>
    <text evidence="1">Binds 2 Zn(2+) ions per subunit.</text>
</comment>
<comment type="pathway">
    <text evidence="1">Amino-acid degradation; L-threonine degradation via oxydo-reductase pathway; glycine from L-threonine: step 1/2.</text>
</comment>
<comment type="subunit">
    <text evidence="1">Homotetramer.</text>
</comment>
<comment type="subcellular location">
    <subcellularLocation>
        <location evidence="1">Cytoplasm</location>
    </subcellularLocation>
</comment>
<comment type="similarity">
    <text evidence="1">Belongs to the zinc-containing alcohol dehydrogenase family.</text>
</comment>
<feature type="chain" id="PRO_1000051670" description="L-threonine 3-dehydrogenase">
    <location>
        <begin position="1"/>
        <end position="341"/>
    </location>
</feature>
<feature type="active site" description="Charge relay system" evidence="1">
    <location>
        <position position="40"/>
    </location>
</feature>
<feature type="active site" description="Charge relay system" evidence="1">
    <location>
        <position position="43"/>
    </location>
</feature>
<feature type="binding site" evidence="1">
    <location>
        <position position="38"/>
    </location>
    <ligand>
        <name>Zn(2+)</name>
        <dbReference type="ChEBI" id="CHEBI:29105"/>
        <label>1</label>
        <note>catalytic</note>
    </ligand>
</feature>
<feature type="binding site" evidence="1">
    <location>
        <position position="63"/>
    </location>
    <ligand>
        <name>Zn(2+)</name>
        <dbReference type="ChEBI" id="CHEBI:29105"/>
        <label>1</label>
        <note>catalytic</note>
    </ligand>
</feature>
<feature type="binding site" evidence="1">
    <location>
        <position position="64"/>
    </location>
    <ligand>
        <name>Zn(2+)</name>
        <dbReference type="ChEBI" id="CHEBI:29105"/>
        <label>1</label>
        <note>catalytic</note>
    </ligand>
</feature>
<feature type="binding site" evidence="1">
    <location>
        <position position="93"/>
    </location>
    <ligand>
        <name>Zn(2+)</name>
        <dbReference type="ChEBI" id="CHEBI:29105"/>
        <label>2</label>
    </ligand>
</feature>
<feature type="binding site" evidence="1">
    <location>
        <position position="96"/>
    </location>
    <ligand>
        <name>Zn(2+)</name>
        <dbReference type="ChEBI" id="CHEBI:29105"/>
        <label>2</label>
    </ligand>
</feature>
<feature type="binding site" evidence="1">
    <location>
        <position position="99"/>
    </location>
    <ligand>
        <name>Zn(2+)</name>
        <dbReference type="ChEBI" id="CHEBI:29105"/>
        <label>2</label>
    </ligand>
</feature>
<feature type="binding site" evidence="1">
    <location>
        <position position="107"/>
    </location>
    <ligand>
        <name>Zn(2+)</name>
        <dbReference type="ChEBI" id="CHEBI:29105"/>
        <label>2</label>
    </ligand>
</feature>
<feature type="binding site" evidence="1">
    <location>
        <position position="175"/>
    </location>
    <ligand>
        <name>NAD(+)</name>
        <dbReference type="ChEBI" id="CHEBI:57540"/>
    </ligand>
</feature>
<feature type="binding site" evidence="1">
    <location>
        <position position="195"/>
    </location>
    <ligand>
        <name>NAD(+)</name>
        <dbReference type="ChEBI" id="CHEBI:57540"/>
    </ligand>
</feature>
<feature type="binding site" evidence="1">
    <location>
        <position position="200"/>
    </location>
    <ligand>
        <name>NAD(+)</name>
        <dbReference type="ChEBI" id="CHEBI:57540"/>
    </ligand>
</feature>
<feature type="binding site" evidence="1">
    <location>
        <begin position="262"/>
        <end position="264"/>
    </location>
    <ligand>
        <name>NAD(+)</name>
        <dbReference type="ChEBI" id="CHEBI:57540"/>
    </ligand>
</feature>
<feature type="binding site" evidence="1">
    <location>
        <begin position="286"/>
        <end position="287"/>
    </location>
    <ligand>
        <name>NAD(+)</name>
        <dbReference type="ChEBI" id="CHEBI:57540"/>
    </ligand>
</feature>
<feature type="site" description="Important for catalytic activity for the proton relay mechanism but does not participate directly in the coordination of zinc atom" evidence="1">
    <location>
        <position position="148"/>
    </location>
</feature>
<gene>
    <name evidence="1" type="primary">tdh</name>
    <name type="ordered locus">YE0074</name>
</gene>
<sequence>MKALAKLKAEEGIWMTNVPQPELGHNDIMIKIRKTAICGTDVHIYNWDEWSQKTIPVPMVVGHEYVGEVVAIGQEVKGFNIGDRVSGEGHITCGHCRNCRGGRTHLCRNTVGVGVNRPGSFAEYLVIPAFNAFKIPDNISDELAAIFDPFGNAVHTALSFDLVGEDVLVSGAGPIGIMAAAVCKHVGARHVVITDVNEYRLDLARKMGVTRAVNVNKENLNDVMAELGMTEGFDVGLEMSGAPPAFRALLNSMNHGGRIAMLGIPPSDMSIDWNQVIFKGLFIKGIYGREMFETWYKMAALIQSGLDLTPIITHRFSIDEFQQGFDAMRSGKSGKVILNWD</sequence>
<evidence type="ECO:0000255" key="1">
    <source>
        <dbReference type="HAMAP-Rule" id="MF_00627"/>
    </source>
</evidence>
<protein>
    <recommendedName>
        <fullName evidence="1">L-threonine 3-dehydrogenase</fullName>
        <shortName evidence="1">TDH</shortName>
        <ecNumber evidence="1">1.1.1.103</ecNumber>
    </recommendedName>
</protein>
<dbReference type="EC" id="1.1.1.103" evidence="1"/>
<dbReference type="EMBL" id="AM286415">
    <property type="protein sequence ID" value="CAL10216.1"/>
    <property type="molecule type" value="Genomic_DNA"/>
</dbReference>
<dbReference type="RefSeq" id="WP_005175928.1">
    <property type="nucleotide sequence ID" value="NC_008800.1"/>
</dbReference>
<dbReference type="RefSeq" id="YP_001004468.1">
    <property type="nucleotide sequence ID" value="NC_008800.1"/>
</dbReference>
<dbReference type="SMR" id="A1JHX8"/>
<dbReference type="KEGG" id="yen:YE0074"/>
<dbReference type="PATRIC" id="fig|393305.7.peg.163"/>
<dbReference type="eggNOG" id="COG1063">
    <property type="taxonomic scope" value="Bacteria"/>
</dbReference>
<dbReference type="HOGENOM" id="CLU_026673_11_0_6"/>
<dbReference type="OrthoDB" id="9773078at2"/>
<dbReference type="UniPathway" id="UPA00046">
    <property type="reaction ID" value="UER00505"/>
</dbReference>
<dbReference type="Proteomes" id="UP000000642">
    <property type="component" value="Chromosome"/>
</dbReference>
<dbReference type="GO" id="GO:0005737">
    <property type="term" value="C:cytoplasm"/>
    <property type="evidence" value="ECO:0007669"/>
    <property type="project" value="UniProtKB-SubCell"/>
</dbReference>
<dbReference type="GO" id="GO:0008743">
    <property type="term" value="F:L-threonine 3-dehydrogenase activity"/>
    <property type="evidence" value="ECO:0007669"/>
    <property type="project" value="UniProtKB-UniRule"/>
</dbReference>
<dbReference type="GO" id="GO:0008270">
    <property type="term" value="F:zinc ion binding"/>
    <property type="evidence" value="ECO:0007669"/>
    <property type="project" value="UniProtKB-UniRule"/>
</dbReference>
<dbReference type="GO" id="GO:0019518">
    <property type="term" value="P:L-threonine catabolic process to glycine"/>
    <property type="evidence" value="ECO:0007669"/>
    <property type="project" value="UniProtKB-UniPathway"/>
</dbReference>
<dbReference type="FunFam" id="3.40.50.720:FF:000059">
    <property type="entry name" value="L-threonine 3-dehydrogenase"/>
    <property type="match status" value="1"/>
</dbReference>
<dbReference type="Gene3D" id="3.90.180.10">
    <property type="entry name" value="Medium-chain alcohol dehydrogenases, catalytic domain"/>
    <property type="match status" value="1"/>
</dbReference>
<dbReference type="Gene3D" id="3.40.50.720">
    <property type="entry name" value="NAD(P)-binding Rossmann-like Domain"/>
    <property type="match status" value="1"/>
</dbReference>
<dbReference type="HAMAP" id="MF_00627">
    <property type="entry name" value="Thr_dehydrog"/>
    <property type="match status" value="1"/>
</dbReference>
<dbReference type="InterPro" id="IPR013149">
    <property type="entry name" value="ADH-like_C"/>
</dbReference>
<dbReference type="InterPro" id="IPR013154">
    <property type="entry name" value="ADH-like_N"/>
</dbReference>
<dbReference type="InterPro" id="IPR002328">
    <property type="entry name" value="ADH_Zn_CS"/>
</dbReference>
<dbReference type="InterPro" id="IPR011032">
    <property type="entry name" value="GroES-like_sf"/>
</dbReference>
<dbReference type="InterPro" id="IPR004627">
    <property type="entry name" value="L-Threonine_3-DHase"/>
</dbReference>
<dbReference type="InterPro" id="IPR036291">
    <property type="entry name" value="NAD(P)-bd_dom_sf"/>
</dbReference>
<dbReference type="InterPro" id="IPR020843">
    <property type="entry name" value="PKS_ER"/>
</dbReference>
<dbReference type="InterPro" id="IPR050129">
    <property type="entry name" value="Zn_alcohol_dh"/>
</dbReference>
<dbReference type="NCBIfam" id="NF003808">
    <property type="entry name" value="PRK05396.1"/>
    <property type="match status" value="1"/>
</dbReference>
<dbReference type="NCBIfam" id="TIGR00692">
    <property type="entry name" value="tdh"/>
    <property type="match status" value="1"/>
</dbReference>
<dbReference type="PANTHER" id="PTHR43401">
    <property type="entry name" value="L-THREONINE 3-DEHYDROGENASE"/>
    <property type="match status" value="1"/>
</dbReference>
<dbReference type="PANTHER" id="PTHR43401:SF2">
    <property type="entry name" value="L-THREONINE 3-DEHYDROGENASE"/>
    <property type="match status" value="1"/>
</dbReference>
<dbReference type="Pfam" id="PF08240">
    <property type="entry name" value="ADH_N"/>
    <property type="match status" value="1"/>
</dbReference>
<dbReference type="Pfam" id="PF00107">
    <property type="entry name" value="ADH_zinc_N"/>
    <property type="match status" value="1"/>
</dbReference>
<dbReference type="SMART" id="SM00829">
    <property type="entry name" value="PKS_ER"/>
    <property type="match status" value="1"/>
</dbReference>
<dbReference type="SUPFAM" id="SSF50129">
    <property type="entry name" value="GroES-like"/>
    <property type="match status" value="1"/>
</dbReference>
<dbReference type="SUPFAM" id="SSF51735">
    <property type="entry name" value="NAD(P)-binding Rossmann-fold domains"/>
    <property type="match status" value="1"/>
</dbReference>
<dbReference type="PROSITE" id="PS00059">
    <property type="entry name" value="ADH_ZINC"/>
    <property type="match status" value="1"/>
</dbReference>